<dbReference type="EMBL" id="CP001400">
    <property type="protein sequence ID" value="ACP38314.1"/>
    <property type="molecule type" value="Genomic_DNA"/>
</dbReference>
<dbReference type="RefSeq" id="WP_012711558.1">
    <property type="nucleotide sequence ID" value="NC_012588.1"/>
</dbReference>
<dbReference type="SMR" id="C3MW92"/>
<dbReference type="KEGG" id="sia:M1425_1565"/>
<dbReference type="HOGENOM" id="CLU_022916_0_0_2"/>
<dbReference type="Proteomes" id="UP000001350">
    <property type="component" value="Chromosome"/>
</dbReference>
<dbReference type="GO" id="GO:0005886">
    <property type="term" value="C:plasma membrane"/>
    <property type="evidence" value="ECO:0007669"/>
    <property type="project" value="UniProtKB-SubCell"/>
</dbReference>
<dbReference type="GO" id="GO:0033178">
    <property type="term" value="C:proton-transporting two-sector ATPase complex, catalytic domain"/>
    <property type="evidence" value="ECO:0007669"/>
    <property type="project" value="InterPro"/>
</dbReference>
<dbReference type="GO" id="GO:0005524">
    <property type="term" value="F:ATP binding"/>
    <property type="evidence" value="ECO:0007669"/>
    <property type="project" value="UniProtKB-UniRule"/>
</dbReference>
<dbReference type="GO" id="GO:0046933">
    <property type="term" value="F:proton-transporting ATP synthase activity, rotational mechanism"/>
    <property type="evidence" value="ECO:0007669"/>
    <property type="project" value="UniProtKB-UniRule"/>
</dbReference>
<dbReference type="GO" id="GO:0046961">
    <property type="term" value="F:proton-transporting ATPase activity, rotational mechanism"/>
    <property type="evidence" value="ECO:0007669"/>
    <property type="project" value="TreeGrafter"/>
</dbReference>
<dbReference type="GO" id="GO:0042777">
    <property type="term" value="P:proton motive force-driven plasma membrane ATP synthesis"/>
    <property type="evidence" value="ECO:0007669"/>
    <property type="project" value="UniProtKB-UniRule"/>
</dbReference>
<dbReference type="CDD" id="cd18112">
    <property type="entry name" value="ATP-synt_V_A-type_beta_C"/>
    <property type="match status" value="1"/>
</dbReference>
<dbReference type="CDD" id="cd18118">
    <property type="entry name" value="ATP-synt_V_A-type_beta_N"/>
    <property type="match status" value="1"/>
</dbReference>
<dbReference type="CDD" id="cd01135">
    <property type="entry name" value="V_A-ATPase_B"/>
    <property type="match status" value="1"/>
</dbReference>
<dbReference type="Gene3D" id="3.40.50.12240">
    <property type="match status" value="1"/>
</dbReference>
<dbReference type="HAMAP" id="MF_00310">
    <property type="entry name" value="ATP_synth_B_arch"/>
    <property type="match status" value="1"/>
</dbReference>
<dbReference type="InterPro" id="IPR055190">
    <property type="entry name" value="ATP-synt_VA_C"/>
</dbReference>
<dbReference type="InterPro" id="IPR020003">
    <property type="entry name" value="ATPase_a/bsu_AS"/>
</dbReference>
<dbReference type="InterPro" id="IPR005724">
    <property type="entry name" value="ATPase_A1-cplx_bsu"/>
</dbReference>
<dbReference type="InterPro" id="IPR004100">
    <property type="entry name" value="ATPase_F1/V1/A1_a/bsu_N"/>
</dbReference>
<dbReference type="InterPro" id="IPR000194">
    <property type="entry name" value="ATPase_F1/V1/A1_a/bsu_nucl-bd"/>
</dbReference>
<dbReference type="InterPro" id="IPR027417">
    <property type="entry name" value="P-loop_NTPase"/>
</dbReference>
<dbReference type="InterPro" id="IPR022879">
    <property type="entry name" value="V-ATPase_su_B/beta"/>
</dbReference>
<dbReference type="NCBIfam" id="TIGR01041">
    <property type="entry name" value="ATP_syn_B_arch"/>
    <property type="match status" value="1"/>
</dbReference>
<dbReference type="NCBIfam" id="NF003235">
    <property type="entry name" value="PRK04196.1"/>
    <property type="match status" value="1"/>
</dbReference>
<dbReference type="PANTHER" id="PTHR43389">
    <property type="entry name" value="V-TYPE PROTON ATPASE SUBUNIT B"/>
    <property type="match status" value="1"/>
</dbReference>
<dbReference type="PANTHER" id="PTHR43389:SF4">
    <property type="entry name" value="V-TYPE PROTON ATPASE SUBUNIT B"/>
    <property type="match status" value="1"/>
</dbReference>
<dbReference type="Pfam" id="PF00006">
    <property type="entry name" value="ATP-synt_ab"/>
    <property type="match status" value="1"/>
</dbReference>
<dbReference type="Pfam" id="PF02874">
    <property type="entry name" value="ATP-synt_ab_N"/>
    <property type="match status" value="1"/>
</dbReference>
<dbReference type="Pfam" id="PF22919">
    <property type="entry name" value="ATP-synt_VA_C"/>
    <property type="match status" value="1"/>
</dbReference>
<dbReference type="PIRSF" id="PIRSF039114">
    <property type="entry name" value="V-ATPsynth_beta/V-ATPase_B"/>
    <property type="match status" value="1"/>
</dbReference>
<dbReference type="SUPFAM" id="SSF52540">
    <property type="entry name" value="P-loop containing nucleoside triphosphate hydrolases"/>
    <property type="match status" value="1"/>
</dbReference>
<dbReference type="PROSITE" id="PS00152">
    <property type="entry name" value="ATPASE_ALPHA_BETA"/>
    <property type="match status" value="1"/>
</dbReference>
<name>AATB_SACI4</name>
<reference key="1">
    <citation type="journal article" date="2009" name="Proc. Natl. Acad. Sci. U.S.A.">
        <title>Biogeography of the Sulfolobus islandicus pan-genome.</title>
        <authorList>
            <person name="Reno M.L."/>
            <person name="Held N.L."/>
            <person name="Fields C.J."/>
            <person name="Burke P.V."/>
            <person name="Whitaker R.J."/>
        </authorList>
    </citation>
    <scope>NUCLEOTIDE SEQUENCE [LARGE SCALE GENOMIC DNA]</scope>
    <source>
        <strain>M.14.25 / Kamchatka #1</strain>
    </source>
</reference>
<evidence type="ECO:0000255" key="1">
    <source>
        <dbReference type="HAMAP-Rule" id="MF_00310"/>
    </source>
</evidence>
<keyword id="KW-0066">ATP synthesis</keyword>
<keyword id="KW-1003">Cell membrane</keyword>
<keyword id="KW-0375">Hydrogen ion transport</keyword>
<keyword id="KW-0406">Ion transport</keyword>
<keyword id="KW-0472">Membrane</keyword>
<keyword id="KW-0813">Transport</keyword>
<comment type="function">
    <text evidence="1">Component of the A-type ATP synthase that produces ATP from ADP in the presence of a proton gradient across the membrane. The B chain is a regulatory subunit.</text>
</comment>
<comment type="subunit">
    <text evidence="1">Has multiple subunits with at least A(3), B(3), C, D, E, F, H, I and proteolipid K(x).</text>
</comment>
<comment type="subcellular location">
    <subcellularLocation>
        <location evidence="1">Cell membrane</location>
        <topology evidence="1">Peripheral membrane protein</topology>
    </subcellularLocation>
</comment>
<comment type="similarity">
    <text evidence="1">Belongs to the ATPase alpha/beta chains family.</text>
</comment>
<feature type="chain" id="PRO_1000205045" description="A-type ATP synthase subunit B">
    <location>
        <begin position="1"/>
        <end position="463"/>
    </location>
</feature>
<accession>C3MW92</accession>
<gene>
    <name evidence="1" type="primary">atpB</name>
    <name type="ordered locus">M1425_1565</name>
</gene>
<proteinExistence type="inferred from homology"/>
<protein>
    <recommendedName>
        <fullName evidence="1">A-type ATP synthase subunit B</fullName>
    </recommendedName>
</protein>
<sequence length="463" mass="51104">MLSVREFSNISMIKGPLIYVQGVTDASYNELVEIEMPNGEKRRGLVIDSQMGIAIVQVFEGTTGVSPTGTKIRMLGRGLEVKISEEMLGRIFNPLGDSLDNGPPVIKGEKRDINGSPLNPAAREYPEEFIQTGISAIDGLNALLRGQKLPIFSGSGLPANMLAAQIAKQATVRGEESNFAVVFAAIGARYDDALFFRKFFEETGAINRVAMIVSLANEPPVMKTLTPKTALTLAEYLAFEQDMHVLAILIDMTNYCEALREISAAREEVPGRGGYPGYMYTDLATIYERAGKVLGKKGSITQMPILTMPNDDITHPIPDLTGYITEGQIVLDRALYNKGIYPPINVLMSLSRLAKDGIGEGKTRDDHKDVSNQLFASYARAVDTRGLAAIIGEDSLSEVDRKYLLFGELFERKFVSQGFNENRDIETTLDIGWEILSVLPESELTNIKTQYIKKYHPNYRGKK</sequence>
<organism>
    <name type="scientific">Saccharolobus islandicus (strain M.14.25 / Kamchatka #1)</name>
    <name type="common">Sulfolobus islandicus</name>
    <dbReference type="NCBI Taxonomy" id="427317"/>
    <lineage>
        <taxon>Archaea</taxon>
        <taxon>Thermoproteota</taxon>
        <taxon>Thermoprotei</taxon>
        <taxon>Sulfolobales</taxon>
        <taxon>Sulfolobaceae</taxon>
        <taxon>Saccharolobus</taxon>
    </lineage>
</organism>